<organism>
    <name type="scientific">Methanocaldococcus jannaschii (strain ATCC 43067 / DSM 2661 / JAL-1 / JCM 10045 / NBRC 100440)</name>
    <name type="common">Methanococcus jannaschii</name>
    <dbReference type="NCBI Taxonomy" id="243232"/>
    <lineage>
        <taxon>Archaea</taxon>
        <taxon>Methanobacteriati</taxon>
        <taxon>Methanobacteriota</taxon>
        <taxon>Methanomada group</taxon>
        <taxon>Methanococci</taxon>
        <taxon>Methanococcales</taxon>
        <taxon>Methanocaldococcaceae</taxon>
        <taxon>Methanocaldococcus</taxon>
    </lineage>
</organism>
<proteinExistence type="predicted"/>
<keyword id="KW-1185">Reference proteome</keyword>
<comment type="similarity">
    <text evidence="1">To M.jannaschii MJ1503.</text>
</comment>
<evidence type="ECO:0000305" key="1"/>
<accession>Q58482</accession>
<name>Y1082_METJA</name>
<sequence>MKEFIINRLKKFTIEDLMRCILGLQEIEIRVYFDLLENGEGSVLEIAERVNRDRTTVQKALRSLMNCGLVDRRKVTEKVGYKYIYNAVDLDRVSDIIEELLDDWYQNVKKWLTYFRENRK</sequence>
<dbReference type="EMBL" id="L77117">
    <property type="protein sequence ID" value="AAB99084.1"/>
    <property type="molecule type" value="Genomic_DNA"/>
</dbReference>
<dbReference type="PIR" id="A64435">
    <property type="entry name" value="A64435"/>
</dbReference>
<dbReference type="RefSeq" id="WP_010870594.1">
    <property type="nucleotide sequence ID" value="NC_000909.1"/>
</dbReference>
<dbReference type="SMR" id="Q58482"/>
<dbReference type="STRING" id="243232.MJ_1082"/>
<dbReference type="PaxDb" id="243232-MJ_1082"/>
<dbReference type="EnsemblBacteria" id="AAB99084">
    <property type="protein sequence ID" value="AAB99084"/>
    <property type="gene ID" value="MJ_1082"/>
</dbReference>
<dbReference type="GeneID" id="1451978"/>
<dbReference type="KEGG" id="mja:MJ_1082"/>
<dbReference type="eggNOG" id="arCOG02242">
    <property type="taxonomic scope" value="Archaea"/>
</dbReference>
<dbReference type="HOGENOM" id="CLU_140786_1_0_2"/>
<dbReference type="InParanoid" id="Q58482"/>
<dbReference type="OrthoDB" id="51378at2157"/>
<dbReference type="PhylomeDB" id="Q58482"/>
<dbReference type="Proteomes" id="UP000000805">
    <property type="component" value="Chromosome"/>
</dbReference>
<dbReference type="CDD" id="cd00090">
    <property type="entry name" value="HTH_ARSR"/>
    <property type="match status" value="1"/>
</dbReference>
<dbReference type="Gene3D" id="1.10.10.10">
    <property type="entry name" value="Winged helix-like DNA-binding domain superfamily/Winged helix DNA-binding domain"/>
    <property type="match status" value="1"/>
</dbReference>
<dbReference type="InterPro" id="IPR011991">
    <property type="entry name" value="ArsR-like_HTH"/>
</dbReference>
<dbReference type="InterPro" id="IPR051797">
    <property type="entry name" value="TrmB-like"/>
</dbReference>
<dbReference type="InterPro" id="IPR002831">
    <property type="entry name" value="Tscrpt_reg_TrmB_N"/>
</dbReference>
<dbReference type="InterPro" id="IPR036388">
    <property type="entry name" value="WH-like_DNA-bd_sf"/>
</dbReference>
<dbReference type="InterPro" id="IPR036390">
    <property type="entry name" value="WH_DNA-bd_sf"/>
</dbReference>
<dbReference type="PANTHER" id="PTHR34293">
    <property type="entry name" value="HTH-TYPE TRANSCRIPTIONAL REGULATOR TRMBL2"/>
    <property type="match status" value="1"/>
</dbReference>
<dbReference type="PANTHER" id="PTHR34293:SF1">
    <property type="entry name" value="HTH-TYPE TRANSCRIPTIONAL REGULATOR TRMBL2"/>
    <property type="match status" value="1"/>
</dbReference>
<dbReference type="Pfam" id="PF01978">
    <property type="entry name" value="TrmB"/>
    <property type="match status" value="1"/>
</dbReference>
<dbReference type="SUPFAM" id="SSF46785">
    <property type="entry name" value="Winged helix' DNA-binding domain"/>
    <property type="match status" value="1"/>
</dbReference>
<protein>
    <recommendedName>
        <fullName>Uncharacterized protein MJ1082</fullName>
    </recommendedName>
</protein>
<gene>
    <name type="ordered locus">MJ1082</name>
</gene>
<reference key="1">
    <citation type="journal article" date="1996" name="Science">
        <title>Complete genome sequence of the methanogenic archaeon, Methanococcus jannaschii.</title>
        <authorList>
            <person name="Bult C.J."/>
            <person name="White O."/>
            <person name="Olsen G.J."/>
            <person name="Zhou L."/>
            <person name="Fleischmann R.D."/>
            <person name="Sutton G.G."/>
            <person name="Blake J.A."/>
            <person name="FitzGerald L.M."/>
            <person name="Clayton R.A."/>
            <person name="Gocayne J.D."/>
            <person name="Kerlavage A.R."/>
            <person name="Dougherty B.A."/>
            <person name="Tomb J.-F."/>
            <person name="Adams M.D."/>
            <person name="Reich C.I."/>
            <person name="Overbeek R."/>
            <person name="Kirkness E.F."/>
            <person name="Weinstock K.G."/>
            <person name="Merrick J.M."/>
            <person name="Glodek A."/>
            <person name="Scott J.L."/>
            <person name="Geoghagen N.S.M."/>
            <person name="Weidman J.F."/>
            <person name="Fuhrmann J.L."/>
            <person name="Nguyen D."/>
            <person name="Utterback T.R."/>
            <person name="Kelley J.M."/>
            <person name="Peterson J.D."/>
            <person name="Sadow P.W."/>
            <person name="Hanna M.C."/>
            <person name="Cotton M.D."/>
            <person name="Roberts K.M."/>
            <person name="Hurst M.A."/>
            <person name="Kaine B.P."/>
            <person name="Borodovsky M."/>
            <person name="Klenk H.-P."/>
            <person name="Fraser C.M."/>
            <person name="Smith H.O."/>
            <person name="Woese C.R."/>
            <person name="Venter J.C."/>
        </authorList>
    </citation>
    <scope>NUCLEOTIDE SEQUENCE [LARGE SCALE GENOMIC DNA]</scope>
    <source>
        <strain>ATCC 43067 / DSM 2661 / JAL-1 / JCM 10045 / NBRC 100440</strain>
    </source>
</reference>
<feature type="chain" id="PRO_0000107162" description="Uncharacterized protein MJ1082">
    <location>
        <begin position="1"/>
        <end position="120"/>
    </location>
</feature>